<keyword id="KW-1015">Disulfide bond</keyword>
<keyword id="KW-0256">Endoplasmic reticulum</keyword>
<keyword id="KW-0325">Glycoprotein</keyword>
<keyword id="KW-0472">Membrane</keyword>
<keyword id="KW-1185">Reference proteome</keyword>
<keyword id="KW-0732">Signal</keyword>
<keyword id="KW-0812">Transmembrane</keyword>
<keyword id="KW-1133">Transmembrane helix</keyword>
<organism>
    <name type="scientific">Xenopus laevis</name>
    <name type="common">African clawed frog</name>
    <dbReference type="NCBI Taxonomy" id="8355"/>
    <lineage>
        <taxon>Eukaryota</taxon>
        <taxon>Metazoa</taxon>
        <taxon>Chordata</taxon>
        <taxon>Craniata</taxon>
        <taxon>Vertebrata</taxon>
        <taxon>Euteleostomi</taxon>
        <taxon>Amphibia</taxon>
        <taxon>Batrachia</taxon>
        <taxon>Anura</taxon>
        <taxon>Pipoidea</taxon>
        <taxon>Pipidae</taxon>
        <taxon>Xenopodinae</taxon>
        <taxon>Xenopus</taxon>
        <taxon>Xenopus</taxon>
    </lineage>
</organism>
<dbReference type="EMBL" id="BC070840">
    <property type="protein sequence ID" value="AAH70840.1"/>
    <property type="molecule type" value="mRNA"/>
</dbReference>
<dbReference type="RefSeq" id="NP_001084811.1">
    <property type="nucleotide sequence ID" value="NM_001091342.1"/>
</dbReference>
<dbReference type="SMR" id="Q6NRB9"/>
<dbReference type="GlyCosmos" id="Q6NRB9">
    <property type="glycosylation" value="3 sites, No reported glycans"/>
</dbReference>
<dbReference type="DNASU" id="431852"/>
<dbReference type="GeneID" id="431852"/>
<dbReference type="KEGG" id="xla:431852"/>
<dbReference type="AGR" id="Xenbase:XB-GENE-1010285"/>
<dbReference type="CTD" id="431852"/>
<dbReference type="Xenbase" id="XB-GENE-1010285">
    <property type="gene designation" value="emc1.L"/>
</dbReference>
<dbReference type="OrthoDB" id="28092at2759"/>
<dbReference type="Proteomes" id="UP000186698">
    <property type="component" value="Chromosome 7L"/>
</dbReference>
<dbReference type="Bgee" id="431852">
    <property type="expression patterns" value="Expressed in camera-type eye and 20 other cell types or tissues"/>
</dbReference>
<dbReference type="GO" id="GO:0072546">
    <property type="term" value="C:EMC complex"/>
    <property type="evidence" value="ECO:0000250"/>
    <property type="project" value="UniProtKB"/>
</dbReference>
<dbReference type="GO" id="GO:0005789">
    <property type="term" value="C:endoplasmic reticulum membrane"/>
    <property type="evidence" value="ECO:0000250"/>
    <property type="project" value="UniProtKB"/>
</dbReference>
<dbReference type="GO" id="GO:0016020">
    <property type="term" value="C:membrane"/>
    <property type="evidence" value="ECO:0000250"/>
    <property type="project" value="UniProtKB"/>
</dbReference>
<dbReference type="GO" id="GO:0034975">
    <property type="term" value="P:protein folding in endoplasmic reticulum"/>
    <property type="evidence" value="ECO:0007669"/>
    <property type="project" value="TreeGrafter"/>
</dbReference>
<dbReference type="GO" id="GO:0045050">
    <property type="term" value="P:protein insertion into ER membrane by stop-transfer membrane-anchor sequence"/>
    <property type="evidence" value="ECO:0000250"/>
    <property type="project" value="UniProtKB"/>
</dbReference>
<dbReference type="GO" id="GO:0071816">
    <property type="term" value="P:tail-anchored membrane protein insertion into ER membrane"/>
    <property type="evidence" value="ECO:0000250"/>
    <property type="project" value="UniProtKB"/>
</dbReference>
<dbReference type="FunFam" id="2.130.10.10:FF:000856">
    <property type="entry name" value="ER membrane protein complex subunit 1"/>
    <property type="match status" value="1"/>
</dbReference>
<dbReference type="Gene3D" id="2.130.10.10">
    <property type="entry name" value="YVTN repeat-like/Quinoprotein amine dehydrogenase"/>
    <property type="match status" value="1"/>
</dbReference>
<dbReference type="InterPro" id="IPR026895">
    <property type="entry name" value="EMC1"/>
</dbReference>
<dbReference type="InterPro" id="IPR011678">
    <property type="entry name" value="EMC1_C"/>
</dbReference>
<dbReference type="InterPro" id="IPR011047">
    <property type="entry name" value="Quinoprotein_ADH-like_sf"/>
</dbReference>
<dbReference type="InterPro" id="IPR015943">
    <property type="entry name" value="WD40/YVTN_repeat-like_dom_sf"/>
</dbReference>
<dbReference type="PANTHER" id="PTHR21573">
    <property type="entry name" value="ER MEMBRANE PROTEIN COMPLEX SUBUNIT 1"/>
    <property type="match status" value="1"/>
</dbReference>
<dbReference type="PANTHER" id="PTHR21573:SF0">
    <property type="entry name" value="ER MEMBRANE PROTEIN COMPLEX SUBUNIT 1"/>
    <property type="match status" value="1"/>
</dbReference>
<dbReference type="Pfam" id="PF25293">
    <property type="entry name" value="Beta-prop_EMC1_N"/>
    <property type="match status" value="1"/>
</dbReference>
<dbReference type="Pfam" id="PF07774">
    <property type="entry name" value="EMC1_C"/>
    <property type="match status" value="1"/>
</dbReference>
<dbReference type="SUPFAM" id="SSF50998">
    <property type="entry name" value="Quinoprotein alcohol dehydrogenase-like"/>
    <property type="match status" value="1"/>
</dbReference>
<accession>Q6NRB9</accession>
<comment type="function">
    <text evidence="1">Part of the endoplasmic reticulum membrane protein complex (EMC) that enables the energy-independent insertion into endoplasmic reticulum membranes of newly synthesized membrane proteins. Preferentially accommodates proteins with transmembrane domains that are weakly hydrophobic or contain destabilizing features such as charged and aromatic residues. Involved in the cotranslational insertion of multi-pass membrane proteins in which stop-transfer membrane-anchor sequences become ER membrane spanning helices. It is also required for the post-translational insertion of tail-anchored/TA proteins in endoplasmic reticulum membranes. By mediating the proper cotranslational insertion of N-terminal transmembrane domains in an N-exo topology, with translocated N-terminus in the lumen of the ER, controls the topology of multi-pass membrane proteins like the G protein-coupled receptors. By regulating the insertion of various proteins in membranes, it is indirectly involved in many cellular processes.</text>
</comment>
<comment type="subunit">
    <text evidence="1">Component of the ER membrane protein complex (EMC).</text>
</comment>
<comment type="subcellular location">
    <subcellularLocation>
        <location evidence="1">Endoplasmic reticulum membrane</location>
        <topology evidence="1">Single-pass type I membrane protein</topology>
    </subcellularLocation>
</comment>
<comment type="similarity">
    <text evidence="3">Belongs to the EMC1 family.</text>
</comment>
<gene>
    <name type="primary">emc1</name>
</gene>
<feature type="signal peptide" evidence="1">
    <location>
        <begin position="1"/>
        <end position="21"/>
    </location>
</feature>
<feature type="chain" id="PRO_0000248601" description="ER membrane protein complex subunit 1">
    <location>
        <begin position="22"/>
        <end position="987"/>
    </location>
</feature>
<feature type="topological domain" description="Lumenal" evidence="1">
    <location>
        <begin position="22"/>
        <end position="956"/>
    </location>
</feature>
<feature type="transmembrane region" description="Helical" evidence="1">
    <location>
        <begin position="957"/>
        <end position="977"/>
    </location>
</feature>
<feature type="topological domain" description="Cytoplasmic" evidence="1">
    <location>
        <begin position="978"/>
        <end position="987"/>
    </location>
</feature>
<feature type="glycosylation site" description="N-linked (GlcNAc...) asparagine" evidence="2">
    <location>
        <position position="812"/>
    </location>
</feature>
<feature type="glycosylation site" description="N-linked (GlcNAc...) asparagine" evidence="2">
    <location>
        <position position="815"/>
    </location>
</feature>
<feature type="glycosylation site" description="N-linked (GlcNAc...) asparagine" evidence="2">
    <location>
        <position position="907"/>
    </location>
</feature>
<feature type="disulfide bond" evidence="1">
    <location>
        <begin position="225"/>
        <end position="235"/>
    </location>
</feature>
<feature type="disulfide bond" evidence="1">
    <location>
        <begin position="337"/>
        <end position="364"/>
    </location>
</feature>
<evidence type="ECO:0000250" key="1">
    <source>
        <dbReference type="UniProtKB" id="Q8N766"/>
    </source>
</evidence>
<evidence type="ECO:0000255" key="2"/>
<evidence type="ECO:0000305" key="3"/>
<reference key="1">
    <citation type="submission" date="2004-05" db="EMBL/GenBank/DDBJ databases">
        <authorList>
            <consortium name="NIH - Xenopus Gene Collection (XGC) project"/>
        </authorList>
    </citation>
    <scope>NUCLEOTIDE SEQUENCE [LARGE SCALE MRNA]</scope>
    <source>
        <tissue>Oocyte</tissue>
    </source>
</reference>
<protein>
    <recommendedName>
        <fullName>ER membrane protein complex subunit 1</fullName>
    </recommendedName>
</protein>
<sequence>MAADLCWLSLLLASLALSGAVYEDQVGKFDWRQEYVGRIKFASLESGLGAKKLIAVTDKNIIAALNSRTGDLLWRHVDKDTSEGTVDALMMIGQDAITVSGGRLLRSWETNIGALNWEAALEPGSFQAVSFAGSQDTARYVAVLKNSALSLYFLSNGHLKWSESLPESDTVQYQLLYSPYKGSVHVVGLVPHSHLTILTFSLEDGSISHQVRVLTPWLRTLHGTCGVIGEGVLVCGDVPMASVHIVSLLSGEETTRYSVQSLDIELAEDPTQLDVITAPQNGIGGSLSQFFLQIAPRRFLLMHYHDGVLTPLRDFSQVSLVNFATTGEKTVVAVMQCKTEGNPKSGAESEYLTGQNCAQEPWYCPGHTYSINLYMADSGRRLLETTMSFTLDQICVRPDSFYLQTFLRKDDSVGYRALVQTEDNQLLFLQQPGKLIWLREESLADVVTMETVDLPLTGAQAELEGEFGKKADGLIGMVLKRLSSQLILLQSWSAHLWKMFCDARKPRSQIRNEINVDTLARDDFNLQKMMVMVTASGKLFGIESSSGSILWKFYLHGVHPGSSFKLLVQRTTAHFPHPPQCTLLVKDKVTEKSAMYVFNPIFGKLSQLAPPPLQRPILQSLLLPIMDNDYAKVLLLLDDQHKVIAFPATKYVLQQLQELHSTIFFYLVDVEKGKLSGLRLNKDLSTEEIWEVLLPADQQRITVVKGKRSNEHVHSQGRVMGDRSVLYKYLNPNLLVLVTESTDTHPERCFIGIYLIDGVTGRIIHSSVQRRARGPVQIIHSENWVVYQYWNSKARRNELTVLELYEGTEQYNSTNFSSLDRPLLPHVLQQSYIFPSAIRAMQATITERGITSRHILIGLPSGAILSLPKALLDPRRPEIPNEYTREENLIPYTPDIQIHAERFINYNQTISRMRGIYTAPSGLESTCLVVAYGLDLYQTRVYPSKQFDVLKDDYDYILISSVLIGLVFATMITKRLAQVKLLNRAWR</sequence>
<proteinExistence type="evidence at transcript level"/>
<name>EMC1_XENLA</name>